<feature type="chain" id="PRO_1000125860" description="Ion-translocating oxidoreductase complex subunit E">
    <location>
        <begin position="1"/>
        <end position="230"/>
    </location>
</feature>
<feature type="transmembrane region" description="Helical" evidence="1">
    <location>
        <begin position="18"/>
        <end position="38"/>
    </location>
</feature>
<feature type="transmembrane region" description="Helical" evidence="1">
    <location>
        <begin position="39"/>
        <end position="59"/>
    </location>
</feature>
<feature type="transmembrane region" description="Helical" evidence="1">
    <location>
        <begin position="63"/>
        <end position="83"/>
    </location>
</feature>
<feature type="transmembrane region" description="Helical" evidence="1">
    <location>
        <begin position="86"/>
        <end position="106"/>
    </location>
</feature>
<feature type="transmembrane region" description="Helical" evidence="1">
    <location>
        <begin position="125"/>
        <end position="145"/>
    </location>
</feature>
<feature type="transmembrane region" description="Helical" evidence="1">
    <location>
        <begin position="182"/>
        <end position="202"/>
    </location>
</feature>
<comment type="function">
    <text evidence="1">Part of a membrane-bound complex that couples electron transfer with translocation of ions across the membrane. Required to maintain the reduced state of SoxR.</text>
</comment>
<comment type="subunit">
    <text evidence="1">The complex is composed of six subunits: RsxA, RsxB, RsxC, RsxD, RsxE and RsxG.</text>
</comment>
<comment type="subcellular location">
    <subcellularLocation>
        <location evidence="1">Cell inner membrane</location>
        <topology evidence="1">Multi-pass membrane protein</topology>
    </subcellularLocation>
</comment>
<comment type="similarity">
    <text evidence="1">Belongs to the NqrDE/RnfAE family.</text>
</comment>
<organism>
    <name type="scientific">Salmonella enteritidis PT4 (strain P125109)</name>
    <dbReference type="NCBI Taxonomy" id="550537"/>
    <lineage>
        <taxon>Bacteria</taxon>
        <taxon>Pseudomonadati</taxon>
        <taxon>Pseudomonadota</taxon>
        <taxon>Gammaproteobacteria</taxon>
        <taxon>Enterobacterales</taxon>
        <taxon>Enterobacteriaceae</taxon>
        <taxon>Salmonella</taxon>
    </lineage>
</organism>
<gene>
    <name evidence="1" type="primary">rsxE</name>
    <name type="synonym">rnfE</name>
    <name type="ordered locus">SEN1593</name>
</gene>
<evidence type="ECO:0000255" key="1">
    <source>
        <dbReference type="HAMAP-Rule" id="MF_00478"/>
    </source>
</evidence>
<dbReference type="EC" id="7.-.-.-" evidence="1"/>
<dbReference type="EMBL" id="AM933172">
    <property type="protein sequence ID" value="CAR33175.1"/>
    <property type="molecule type" value="Genomic_DNA"/>
</dbReference>
<dbReference type="RefSeq" id="WP_001289628.1">
    <property type="nucleotide sequence ID" value="NC_011294.1"/>
</dbReference>
<dbReference type="SMR" id="B5QV05"/>
<dbReference type="KEGG" id="set:SEN1593"/>
<dbReference type="HOGENOM" id="CLU_046659_1_0_6"/>
<dbReference type="Proteomes" id="UP000000613">
    <property type="component" value="Chromosome"/>
</dbReference>
<dbReference type="GO" id="GO:0005886">
    <property type="term" value="C:plasma membrane"/>
    <property type="evidence" value="ECO:0007669"/>
    <property type="project" value="UniProtKB-SubCell"/>
</dbReference>
<dbReference type="GO" id="GO:0022900">
    <property type="term" value="P:electron transport chain"/>
    <property type="evidence" value="ECO:0007669"/>
    <property type="project" value="UniProtKB-UniRule"/>
</dbReference>
<dbReference type="HAMAP" id="MF_00478">
    <property type="entry name" value="RsxE_RnfE"/>
    <property type="match status" value="1"/>
</dbReference>
<dbReference type="InterPro" id="IPR003667">
    <property type="entry name" value="NqrDE/RnfAE"/>
</dbReference>
<dbReference type="InterPro" id="IPR010968">
    <property type="entry name" value="RnfE"/>
</dbReference>
<dbReference type="NCBIfam" id="NF009070">
    <property type="entry name" value="PRK12405.1"/>
    <property type="match status" value="1"/>
</dbReference>
<dbReference type="NCBIfam" id="TIGR01948">
    <property type="entry name" value="rnfE"/>
    <property type="match status" value="1"/>
</dbReference>
<dbReference type="PANTHER" id="PTHR30586">
    <property type="entry name" value="ELECTRON TRANSPORT COMPLEX PROTEIN RNFE"/>
    <property type="match status" value="1"/>
</dbReference>
<dbReference type="PANTHER" id="PTHR30586:SF0">
    <property type="entry name" value="ION-TRANSLOCATING OXIDOREDUCTASE COMPLEX SUBUNIT E"/>
    <property type="match status" value="1"/>
</dbReference>
<dbReference type="Pfam" id="PF02508">
    <property type="entry name" value="Rnf-Nqr"/>
    <property type="match status" value="1"/>
</dbReference>
<dbReference type="PIRSF" id="PIRSF006102">
    <property type="entry name" value="NQR_DE"/>
    <property type="match status" value="1"/>
</dbReference>
<reference key="1">
    <citation type="journal article" date="2008" name="Genome Res.">
        <title>Comparative genome analysis of Salmonella enteritidis PT4 and Salmonella gallinarum 287/91 provides insights into evolutionary and host adaptation pathways.</title>
        <authorList>
            <person name="Thomson N.R."/>
            <person name="Clayton D.J."/>
            <person name="Windhorst D."/>
            <person name="Vernikos G."/>
            <person name="Davidson S."/>
            <person name="Churcher C."/>
            <person name="Quail M.A."/>
            <person name="Stevens M."/>
            <person name="Jones M.A."/>
            <person name="Watson M."/>
            <person name="Barron A."/>
            <person name="Layton A."/>
            <person name="Pickard D."/>
            <person name="Kingsley R.A."/>
            <person name="Bignell A."/>
            <person name="Clark L."/>
            <person name="Harris B."/>
            <person name="Ormond D."/>
            <person name="Abdellah Z."/>
            <person name="Brooks K."/>
            <person name="Cherevach I."/>
            <person name="Chillingworth T."/>
            <person name="Woodward J."/>
            <person name="Norberczak H."/>
            <person name="Lord A."/>
            <person name="Arrowsmith C."/>
            <person name="Jagels K."/>
            <person name="Moule S."/>
            <person name="Mungall K."/>
            <person name="Saunders M."/>
            <person name="Whitehead S."/>
            <person name="Chabalgoity J.A."/>
            <person name="Maskell D."/>
            <person name="Humphreys T."/>
            <person name="Roberts M."/>
            <person name="Barrow P.A."/>
            <person name="Dougan G."/>
            <person name="Parkhill J."/>
        </authorList>
    </citation>
    <scope>NUCLEOTIDE SEQUENCE [LARGE SCALE GENOMIC DNA]</scope>
    <source>
        <strain>P125109</strain>
    </source>
</reference>
<accession>B5QV05</accession>
<protein>
    <recommendedName>
        <fullName evidence="1">Ion-translocating oxidoreductase complex subunit E</fullName>
        <ecNumber evidence="1">7.-.-.-</ecNumber>
    </recommendedName>
    <alternativeName>
        <fullName evidence="1">Rsx electron transport complex subunit E</fullName>
    </alternativeName>
</protein>
<sequence>MSEIKDIVVQGLWKNNSALVQLLGLCPLLAVTSTATNALGLGLATTLVLTLTNLTVSALRRWTPAEIRIPIYVMIIASVVSAVQMLINAYAFGLYQSLGIFIPLIVTNCIVVGRAEAFAAKKGPWLSALDGFSIGMGATGAMFVLGSLREILGNGTLFDGADSLLGGWAKVLRVEIFHTDSPFLLAMLPPGAFIGLGLMLAVKYLIDEKMKKRRAETAPSAVPAGETGKV</sequence>
<name>RSXE_SALEP</name>
<keyword id="KW-0997">Cell inner membrane</keyword>
<keyword id="KW-1003">Cell membrane</keyword>
<keyword id="KW-0249">Electron transport</keyword>
<keyword id="KW-0472">Membrane</keyword>
<keyword id="KW-1278">Translocase</keyword>
<keyword id="KW-0812">Transmembrane</keyword>
<keyword id="KW-1133">Transmembrane helix</keyword>
<keyword id="KW-0813">Transport</keyword>
<proteinExistence type="inferred from homology"/>